<proteinExistence type="evidence at protein level"/>
<keyword id="KW-0002">3D-structure</keyword>
<keyword id="KW-0903">Direct protein sequencing</keyword>
<keyword id="KW-1015">Disulfide bond</keyword>
<keyword id="KW-0349">Heme</keyword>
<keyword id="KW-0408">Iron</keyword>
<keyword id="KW-0479">Metal-binding</keyword>
<keyword id="KW-0561">Oxygen transport</keyword>
<keyword id="KW-0813">Transport</keyword>
<sequence>KKQCGVLEGLKVKSEWGRAYGSGHDREAFSQAIWRATFAQVPESRSLFKRVHGDDTSHPAFIAHAERVLGGLDIAISTLDQPATLKEELDHLQVQHEGRKIPDNYFDAFKTAILHVVAAQLGRCYDREAWDACIDHIEDGIKGHH</sequence>
<reference key="1">
    <citation type="journal article" date="1988" name="J. Biol. Chem.">
        <title>The amino acid sequences of chains a, b, and c that form the trimer subunit of the extracellular hemoglobin from Lumbricus terrestris.</title>
        <authorList>
            <person name="Fushitani K."/>
            <person name="Matsuura M.S.A."/>
            <person name="Riggs A.F."/>
        </authorList>
    </citation>
    <scope>PROTEIN SEQUENCE</scope>
</reference>
<reference key="2">
    <citation type="journal article" date="1982" name="J. Biol. Chem.">
        <title>The amino acid sequence of a major polypeptide chain of earthworm hemoglobin.</title>
        <authorList>
            <person name="Garlick R.L."/>
            <person name="Riggs A.F."/>
        </authorList>
    </citation>
    <scope>PRELIMINARY PROTEIN SEQUENCE</scope>
</reference>
<reference key="3">
    <citation type="journal article" date="2004" name="J. Mol. Biol.">
        <title>Crystal structure of the hemoglobin dodecamer from Lumbricus erythrocruorin: allosteric core of giant annelid respiratory complexes.</title>
        <authorList>
            <person name="Strand K."/>
            <person name="Knapp J.E."/>
            <person name="Bhyravbhatla B."/>
            <person name="Royer W.E. Jr."/>
        </authorList>
    </citation>
    <scope>X-RAY CRYSTALLOGRAPHY (2.60 ANGSTROMS) IN COMPLEX WITH HEME</scope>
    <scope>SUBUNIT</scope>
</reference>
<protein>
    <recommendedName>
        <fullName>Extracellular globin-2</fullName>
    </recommendedName>
    <alternativeName>
        <fullName>Erythrocruorin</fullName>
    </alternativeName>
    <alternativeName>
        <fullName>Globin AIII</fullName>
    </alternativeName>
    <alternativeName>
        <fullName>Globin B</fullName>
    </alternativeName>
    <alternativeName>
        <fullName>Globin II</fullName>
    </alternativeName>
</protein>
<feature type="chain" id="PRO_0000052512" description="Extracellular globin-2">
    <location>
        <begin position="1"/>
        <end position="145"/>
    </location>
</feature>
<feature type="domain" description="Globin" evidence="2">
    <location>
        <begin position="3"/>
        <end position="145"/>
    </location>
</feature>
<feature type="binding site" description="proximal binding residue">
    <location>
        <position position="96"/>
    </location>
    <ligand>
        <name>heme b</name>
        <dbReference type="ChEBI" id="CHEBI:60344"/>
    </ligand>
    <ligandPart>
        <name>Fe</name>
        <dbReference type="ChEBI" id="CHEBI:18248"/>
    </ligandPart>
</feature>
<feature type="disulfide bond" evidence="1">
    <location>
        <begin position="4"/>
        <end position="133"/>
    </location>
</feature>
<feature type="disulfide bond" description="Interchain (with chain IV)" evidence="1">
    <location>
        <position position="124"/>
    </location>
</feature>
<feature type="helix" evidence="4">
    <location>
        <begin position="6"/>
        <end position="20"/>
    </location>
</feature>
<feature type="helix" evidence="4">
    <location>
        <begin position="23"/>
        <end position="40"/>
    </location>
</feature>
<feature type="helix" evidence="4">
    <location>
        <begin position="42"/>
        <end position="51"/>
    </location>
</feature>
<feature type="turn" evidence="4">
    <location>
        <begin position="52"/>
        <end position="54"/>
    </location>
</feature>
<feature type="helix" evidence="4">
    <location>
        <begin position="59"/>
        <end position="77"/>
    </location>
</feature>
<feature type="turn" evidence="4">
    <location>
        <begin position="78"/>
        <end position="80"/>
    </location>
</feature>
<feature type="helix" evidence="4">
    <location>
        <begin position="82"/>
        <end position="96"/>
    </location>
</feature>
<feature type="helix" evidence="4">
    <location>
        <begin position="103"/>
        <end position="121"/>
    </location>
</feature>
<feature type="helix" evidence="4">
    <location>
        <begin position="127"/>
        <end position="142"/>
    </location>
</feature>
<accession>P02218</accession>
<dbReference type="PIR" id="A02540">
    <property type="entry name" value="GGEWA3"/>
</dbReference>
<dbReference type="PIR" id="B28151">
    <property type="entry name" value="B28151"/>
</dbReference>
<dbReference type="PDB" id="1X9F">
    <property type="method" value="X-ray"/>
    <property type="resolution" value="2.60 A"/>
    <property type="chains" value="B/F/J=1-145"/>
</dbReference>
<dbReference type="PDB" id="2GTL">
    <property type="method" value="X-ray"/>
    <property type="resolution" value="3.50 A"/>
    <property type="chains" value="B/F/J=1-145"/>
</dbReference>
<dbReference type="PDB" id="4V93">
    <property type="method" value="EM"/>
    <property type="resolution" value="8.10 A"/>
    <property type="chains" value="A4/AB/AG/AL/AQ/AV/Aa/Af/Ak/Ap/Au/Az/B2/B3/B7/BA/BE/BF/BJ/BK/BO/BP/BT/BU/BY/BZ/Bd/Be/Bi/Bj/Bn/Bo/Bs/Bt/Bx/By=1-145"/>
</dbReference>
<dbReference type="PDB" id="5M3L">
    <property type="method" value="EM"/>
    <property type="resolution" value="3.80 A"/>
    <property type="chains" value="B/F/J=1-145"/>
</dbReference>
<dbReference type="PDBsum" id="1X9F"/>
<dbReference type="PDBsum" id="2GTL"/>
<dbReference type="PDBsum" id="4V93"/>
<dbReference type="PDBsum" id="5M3L"/>
<dbReference type="SMR" id="P02218"/>
<dbReference type="DIP" id="DIP-29123N"/>
<dbReference type="IntAct" id="P02218">
    <property type="interactions" value="1"/>
</dbReference>
<dbReference type="EvolutionaryTrace" id="P02218"/>
<dbReference type="GO" id="GO:0005576">
    <property type="term" value="C:extracellular region"/>
    <property type="evidence" value="ECO:0007669"/>
    <property type="project" value="InterPro"/>
</dbReference>
<dbReference type="GO" id="GO:0005833">
    <property type="term" value="C:hemoglobin complex"/>
    <property type="evidence" value="ECO:0007669"/>
    <property type="project" value="InterPro"/>
</dbReference>
<dbReference type="GO" id="GO:0020037">
    <property type="term" value="F:heme binding"/>
    <property type="evidence" value="ECO:0007669"/>
    <property type="project" value="InterPro"/>
</dbReference>
<dbReference type="GO" id="GO:0005506">
    <property type="term" value="F:iron ion binding"/>
    <property type="evidence" value="ECO:0007669"/>
    <property type="project" value="InterPro"/>
</dbReference>
<dbReference type="GO" id="GO:0019825">
    <property type="term" value="F:oxygen binding"/>
    <property type="evidence" value="ECO:0007669"/>
    <property type="project" value="InterPro"/>
</dbReference>
<dbReference type="GO" id="GO:0005344">
    <property type="term" value="F:oxygen carrier activity"/>
    <property type="evidence" value="ECO:0007669"/>
    <property type="project" value="UniProtKB-KW"/>
</dbReference>
<dbReference type="CDD" id="cd01040">
    <property type="entry name" value="Mb-like"/>
    <property type="match status" value="1"/>
</dbReference>
<dbReference type="Gene3D" id="1.10.490.10">
    <property type="entry name" value="Globins"/>
    <property type="match status" value="1"/>
</dbReference>
<dbReference type="InterPro" id="IPR002336">
    <property type="entry name" value="Erythrocruorin"/>
</dbReference>
<dbReference type="InterPro" id="IPR000971">
    <property type="entry name" value="Globin"/>
</dbReference>
<dbReference type="InterPro" id="IPR009050">
    <property type="entry name" value="Globin-like_sf"/>
</dbReference>
<dbReference type="InterPro" id="IPR012292">
    <property type="entry name" value="Globin/Proto"/>
</dbReference>
<dbReference type="InterPro" id="IPR014610">
    <property type="entry name" value="Haemoglobin_extracell"/>
</dbReference>
<dbReference type="InterPro" id="IPR044399">
    <property type="entry name" value="Mb-like_M"/>
</dbReference>
<dbReference type="Pfam" id="PF00042">
    <property type="entry name" value="Globin"/>
    <property type="match status" value="1"/>
</dbReference>
<dbReference type="PIRSF" id="PIRSF036517">
    <property type="entry name" value="Ext_hemo"/>
    <property type="match status" value="1"/>
</dbReference>
<dbReference type="PRINTS" id="PR00611">
    <property type="entry name" value="ERYTHCRUORIN"/>
</dbReference>
<dbReference type="SUPFAM" id="SSF46458">
    <property type="entry name" value="Globin-like"/>
    <property type="match status" value="1"/>
</dbReference>
<dbReference type="PROSITE" id="PS01033">
    <property type="entry name" value="GLOBIN"/>
    <property type="match status" value="1"/>
</dbReference>
<organism>
    <name type="scientific">Lumbricus terrestris</name>
    <name type="common">Common earthworm</name>
    <dbReference type="NCBI Taxonomy" id="6398"/>
    <lineage>
        <taxon>Eukaryota</taxon>
        <taxon>Metazoa</taxon>
        <taxon>Spiralia</taxon>
        <taxon>Lophotrochozoa</taxon>
        <taxon>Annelida</taxon>
        <taxon>Clitellata</taxon>
        <taxon>Oligochaeta</taxon>
        <taxon>Crassiclitellata</taxon>
        <taxon>Lumbricina</taxon>
        <taxon>Lumbricidae</taxon>
        <taxon>Lumbricinae</taxon>
        <taxon>Lumbricus</taxon>
    </lineage>
</organism>
<comment type="subunit">
    <text evidence="3">The extracellular hemoglobin of the earthworm consists of 12 subunits that have a hexagonal bilayer structure with a molecular weight near 3.8 million. Each one-twelfth subunit is composed primarily of disulfide linked trimers (chains A, B, and C) and monomers (chain D).</text>
</comment>
<comment type="similarity">
    <text evidence="2">Belongs to the globin family.</text>
</comment>
<name>GLB2_LUMTE</name>
<evidence type="ECO:0000250" key="1"/>
<evidence type="ECO:0000255" key="2">
    <source>
        <dbReference type="PROSITE-ProRule" id="PRU00238"/>
    </source>
</evidence>
<evidence type="ECO:0000269" key="3">
    <source>
    </source>
</evidence>
<evidence type="ECO:0007829" key="4">
    <source>
        <dbReference type="PDB" id="1X9F"/>
    </source>
</evidence>